<proteinExistence type="evidence at transcript level"/>
<dbReference type="SMR" id="P0DME9"/>
<dbReference type="GO" id="GO:0005576">
    <property type="term" value="C:extracellular region"/>
    <property type="evidence" value="ECO:0007669"/>
    <property type="project" value="UniProtKB-SubCell"/>
</dbReference>
<dbReference type="GO" id="GO:0016020">
    <property type="term" value="C:membrane"/>
    <property type="evidence" value="ECO:0007669"/>
    <property type="project" value="UniProtKB-KW"/>
</dbReference>
<dbReference type="GO" id="GO:0044218">
    <property type="term" value="C:other organism cell membrane"/>
    <property type="evidence" value="ECO:0007669"/>
    <property type="project" value="UniProtKB-KW"/>
</dbReference>
<feature type="signal peptide" evidence="2">
    <location>
        <begin position="1"/>
        <end position="23"/>
    </location>
</feature>
<feature type="peptide" id="PRO_0000428690" description="Peptide Hp1412">
    <location>
        <begin position="24"/>
        <end position="36"/>
    </location>
</feature>
<feature type="propeptide" id="PRO_0000428691" evidence="1">
    <location>
        <begin position="40"/>
        <end position="68"/>
    </location>
</feature>
<feature type="modified residue" description="Cysteine amide" evidence="1">
    <location>
        <position position="36"/>
    </location>
</feature>
<organism>
    <name type="scientific">Heterometrus petersii</name>
    <name type="common">Asian forest scorpion</name>
    <dbReference type="NCBI Taxonomy" id="754296"/>
    <lineage>
        <taxon>Eukaryota</taxon>
        <taxon>Metazoa</taxon>
        <taxon>Ecdysozoa</taxon>
        <taxon>Arthropoda</taxon>
        <taxon>Chelicerata</taxon>
        <taxon>Arachnida</taxon>
        <taxon>Scorpiones</taxon>
        <taxon>Iurida</taxon>
        <taxon>Scorpionoidea</taxon>
        <taxon>Scorpionidae</taxon>
        <taxon>Heterometrinae</taxon>
        <taxon>Heterometrus</taxon>
    </lineage>
</organism>
<protein>
    <recommendedName>
        <fullName evidence="4">Peptide Hp1412</fullName>
    </recommendedName>
</protein>
<sequence length="68" mass="7957">MKTHFAIFLITLFLFQMFSQSDAIFKAIWSGIKRLCGKRGLSDLYDLDEMFDGEISQADIDFLKELMR</sequence>
<accession>P0DME9</accession>
<evidence type="ECO:0000250" key="1"/>
<evidence type="ECO:0000255" key="2"/>
<evidence type="ECO:0000269" key="3">
    <source>
    </source>
</evidence>
<evidence type="ECO:0000303" key="4">
    <source>
    </source>
</evidence>
<evidence type="ECO:0000305" key="5"/>
<evidence type="ECO:0000305" key="6">
    <source>
    </source>
</evidence>
<comment type="function">
    <text evidence="1 3">Amphipathic peptide with antimicrobial activity.</text>
</comment>
<comment type="subcellular location">
    <subcellularLocation>
        <location evidence="1">Secreted</location>
    </subcellularLocation>
    <subcellularLocation>
        <location evidence="1">Target cell membrane</location>
    </subcellularLocation>
    <text evidence="1">Forms an alpha-helical membrane channel in the prey.</text>
</comment>
<comment type="tissue specificity">
    <text>Expressed by the venom gland.</text>
</comment>
<comment type="miscellaneous">
    <text evidence="6">Negative results: does not show antiviral activity.</text>
</comment>
<comment type="similarity">
    <text evidence="5">Belongs to the non-disulfide-bridged peptide (NDBP) superfamily. Short antimicrobial peptide (group 4) family.</text>
</comment>
<keyword id="KW-0027">Amidation</keyword>
<keyword id="KW-0929">Antimicrobial</keyword>
<keyword id="KW-0165">Cleavage on pair of basic residues</keyword>
<keyword id="KW-0472">Membrane</keyword>
<keyword id="KW-0964">Secreted</keyword>
<keyword id="KW-0732">Signal</keyword>
<keyword id="KW-1052">Target cell membrane</keyword>
<keyword id="KW-1053">Target membrane</keyword>
<name>NDB4W_HETPE</name>
<reference key="1">
    <citation type="journal article" date="2010" name="Proteomics">
        <title>Molecular diversity of toxic components from the scorpion Heterometrus petersii venom revealed by proteomic and transcriptome analysis.</title>
        <authorList>
            <person name="Ma Y."/>
            <person name="Zhao Y."/>
            <person name="Zhao R."/>
            <person name="Zhang W."/>
            <person name="He Y."/>
            <person name="Wu Y."/>
            <person name="Cao Z."/>
            <person name="Guo L."/>
            <person name="Li W."/>
        </authorList>
    </citation>
    <scope>NUCLEOTIDE SEQUENCE [MRNA]</scope>
    <source>
        <tissue>Venom gland</tissue>
    </source>
</reference>
<reference key="2">
    <citation type="journal article" date="2014" name="Antiviral Res.">
        <title>Inhibitory activity and mechanism of two scorpion venom peptides against herpes simplex virus type 1.</title>
        <authorList>
            <person name="Hong W."/>
            <person name="Li T."/>
            <person name="Song Y."/>
            <person name="Zhang R."/>
            <person name="Zeng Z."/>
            <person name="Han S."/>
            <person name="Zhang X."/>
            <person name="Wu Y."/>
            <person name="Li W."/>
            <person name="Cao Z."/>
        </authorList>
    </citation>
    <scope>SYNTHESIS OF 24-36</scope>
    <scope>FUNCTION</scope>
</reference>